<reference key="1">
    <citation type="journal article" date="2000" name="Nature">
        <title>Genome sequence of the endocellular bacterial symbiont of aphids Buchnera sp. APS.</title>
        <authorList>
            <person name="Shigenobu S."/>
            <person name="Watanabe H."/>
            <person name="Hattori M."/>
            <person name="Sakaki Y."/>
            <person name="Ishikawa H."/>
        </authorList>
    </citation>
    <scope>NUCLEOTIDE SEQUENCE [LARGE SCALE GENOMIC DNA]</scope>
    <source>
        <strain>APS</strain>
    </source>
</reference>
<name>DPO3A_BUCAI</name>
<sequence>MNEPKFIHLHVHSDYSMIDGLSKPEDLVKKAASLNMPAIAITDYNNLYGVIKFYNMAHKLGLKPIIGITVNFFSDLINNQLTKLTLLASTQEGYKNLILLISRAYQKGYVHNNHVTIEKKWFSEINKGLILLSGGPQGELGKVLLNGQSSLISICLSFYQKYFPDSYYLELFRTNRDNEETYLHLAVDLSLSTGVPIVATNDVCFLSQEDFKIHKIRIAINEGEILQHSKIQNNYSNQQFLKTTEEMSDLFSDIPEALINSVEIAKRCNVFIHSGKYFLPQFRTGKISVEKYLIKEAYKGIKKRLNSRYLDIEKYKDIYSQYINRLDMELTVINKMGFPGYFLIVMEFIQWAKDNNIPVGPGRGSGAGSLVAYALNITEVDPLSFNLLFERFLNPERISMPDFDIDFCMEKRDQVIDHVSEIYGKNAVAQIITFGTLTAKAVIRDVGRVLGYPYGFINKLSKLVPLDPGITLKEAFSKESELFNLYKNNEDVKNLIDIAKKLEGTNRNIGKHAGGVVISPTKITDFCPLYCDEKGNNPVTQFDKNDIEYIGLVKFDFLGLRTLTIISYAVEMINTKLNLNKKRTININSIPLDDAKCFKLLKNSETTGVFQLESYGMKDLIKRLQPDCFEDMIALVALFRPGPLQSGMVDNFINRKHGRENISYPDHKWQHILLKPILESTYGIILYQEQVMEIAQVLSGYTLGSADILRRAMSKKNLKDMSEQRAIFEEGASNNGIDKKLSIKIFDLLEKFAGYGFNKSHSVAYALVSYQTLWLKSHYPAEFIAAAMTSDIDNTEKIVILINESLNMGVKIIPPNINLSKYEFYVNDQGDIVYGLGAIKGIGKNSVQVLIKEREENKFFHDLFDLCMRIDSQKITRRVLEKLIMSGSCDCFDKNRNYLLQSIDDAINASKESFRIKSFKQDSLFGIFQNELNQVKKNNLVNLVCPEKNKLQNEYQVLGFYLTGHPINQYKKELECYVNGVKLSQLKFIKRNKKILVAGIIVSIKIKITKNKNRIAILVLDDNTSRLEVVIFTELLNAYESLVKLNKLLFVHGMLNVSFIDKNIKMTAYALIDLSVLRKKYINKLIIILNKEKTNIFFLNNLYECLDKQSKGNIPVFIFFDNKEVCLNKKLNKKWFVVITDDFLNKLKFLVGSKNIELKFN</sequence>
<protein>
    <recommendedName>
        <fullName>DNA polymerase III subunit alpha</fullName>
        <ecNumber>2.7.7.7</ecNumber>
    </recommendedName>
</protein>
<organism>
    <name type="scientific">Buchnera aphidicola subsp. Acyrthosiphon pisum (strain APS)</name>
    <name type="common">Acyrthosiphon pisum symbiotic bacterium</name>
    <dbReference type="NCBI Taxonomy" id="107806"/>
    <lineage>
        <taxon>Bacteria</taxon>
        <taxon>Pseudomonadati</taxon>
        <taxon>Pseudomonadota</taxon>
        <taxon>Gammaproteobacteria</taxon>
        <taxon>Enterobacterales</taxon>
        <taxon>Erwiniaceae</taxon>
        <taxon>Buchnera</taxon>
    </lineage>
</organism>
<dbReference type="EC" id="2.7.7.7"/>
<dbReference type="EMBL" id="BA000003">
    <property type="protein sequence ID" value="BAB12953.1"/>
    <property type="molecule type" value="Genomic_DNA"/>
</dbReference>
<dbReference type="RefSeq" id="NP_240067.1">
    <property type="nucleotide sequence ID" value="NC_002528.1"/>
</dbReference>
<dbReference type="RefSeq" id="WP_010896021.1">
    <property type="nucleotide sequence ID" value="NC_002528.1"/>
</dbReference>
<dbReference type="SMR" id="P57332"/>
<dbReference type="STRING" id="563178.BUAP5A_234"/>
<dbReference type="EnsemblBacteria" id="BAB12953">
    <property type="protein sequence ID" value="BAB12953"/>
    <property type="gene ID" value="BAB12953"/>
</dbReference>
<dbReference type="KEGG" id="buc:BU238"/>
<dbReference type="PATRIC" id="fig|107806.10.peg.251"/>
<dbReference type="eggNOG" id="COG0587">
    <property type="taxonomic scope" value="Bacteria"/>
</dbReference>
<dbReference type="HOGENOM" id="CLU_001600_0_0_6"/>
<dbReference type="Proteomes" id="UP000001806">
    <property type="component" value="Chromosome"/>
</dbReference>
<dbReference type="GO" id="GO:0005737">
    <property type="term" value="C:cytoplasm"/>
    <property type="evidence" value="ECO:0007669"/>
    <property type="project" value="UniProtKB-SubCell"/>
</dbReference>
<dbReference type="GO" id="GO:0008408">
    <property type="term" value="F:3'-5' exonuclease activity"/>
    <property type="evidence" value="ECO:0007669"/>
    <property type="project" value="InterPro"/>
</dbReference>
<dbReference type="GO" id="GO:0003887">
    <property type="term" value="F:DNA-directed DNA polymerase activity"/>
    <property type="evidence" value="ECO:0007669"/>
    <property type="project" value="UniProtKB-KW"/>
</dbReference>
<dbReference type="GO" id="GO:0003676">
    <property type="term" value="F:nucleic acid binding"/>
    <property type="evidence" value="ECO:0007669"/>
    <property type="project" value="InterPro"/>
</dbReference>
<dbReference type="GO" id="GO:0006260">
    <property type="term" value="P:DNA replication"/>
    <property type="evidence" value="ECO:0007669"/>
    <property type="project" value="UniProtKB-KW"/>
</dbReference>
<dbReference type="CDD" id="cd04485">
    <property type="entry name" value="DnaE_OBF"/>
    <property type="match status" value="1"/>
</dbReference>
<dbReference type="CDD" id="cd07433">
    <property type="entry name" value="PHP_PolIIIA_DnaE1"/>
    <property type="match status" value="1"/>
</dbReference>
<dbReference type="FunFam" id="1.10.10.1600:FF:000001">
    <property type="entry name" value="DNA polymerase III subunit alpha"/>
    <property type="match status" value="1"/>
</dbReference>
<dbReference type="Gene3D" id="1.10.150.870">
    <property type="match status" value="1"/>
</dbReference>
<dbReference type="Gene3D" id="1.10.10.1600">
    <property type="entry name" value="Bacterial DNA polymerase III alpha subunit, thumb domain"/>
    <property type="match status" value="1"/>
</dbReference>
<dbReference type="Gene3D" id="3.20.20.140">
    <property type="entry name" value="Metal-dependent hydrolases"/>
    <property type="match status" value="1"/>
</dbReference>
<dbReference type="InterPro" id="IPR011708">
    <property type="entry name" value="DNA_pol3_alpha_NTPase_dom"/>
</dbReference>
<dbReference type="InterPro" id="IPR041931">
    <property type="entry name" value="DNA_pol3_alpha_thumb_dom"/>
</dbReference>
<dbReference type="InterPro" id="IPR040982">
    <property type="entry name" value="DNA_pol3_finger"/>
</dbReference>
<dbReference type="InterPro" id="IPR048472">
    <property type="entry name" value="DNA_pol_IIIA_C"/>
</dbReference>
<dbReference type="InterPro" id="IPR004805">
    <property type="entry name" value="DnaE2/DnaE/PolC"/>
</dbReference>
<dbReference type="InterPro" id="IPR029460">
    <property type="entry name" value="DNAPol_HHH"/>
</dbReference>
<dbReference type="InterPro" id="IPR004365">
    <property type="entry name" value="NA-bd_OB_tRNA"/>
</dbReference>
<dbReference type="InterPro" id="IPR004013">
    <property type="entry name" value="PHP_dom"/>
</dbReference>
<dbReference type="InterPro" id="IPR003141">
    <property type="entry name" value="Pol/His_phosphatase_N"/>
</dbReference>
<dbReference type="InterPro" id="IPR016195">
    <property type="entry name" value="Pol/histidinol_Pase-like"/>
</dbReference>
<dbReference type="InterPro" id="IPR049821">
    <property type="entry name" value="PolIIIA_DnaE1_PHP"/>
</dbReference>
<dbReference type="NCBIfam" id="TIGR00594">
    <property type="entry name" value="polc"/>
    <property type="match status" value="1"/>
</dbReference>
<dbReference type="NCBIfam" id="NF004226">
    <property type="entry name" value="PRK05673.1"/>
    <property type="match status" value="1"/>
</dbReference>
<dbReference type="PANTHER" id="PTHR32294">
    <property type="entry name" value="DNA POLYMERASE III SUBUNIT ALPHA"/>
    <property type="match status" value="1"/>
</dbReference>
<dbReference type="PANTHER" id="PTHR32294:SF0">
    <property type="entry name" value="DNA POLYMERASE III SUBUNIT ALPHA"/>
    <property type="match status" value="1"/>
</dbReference>
<dbReference type="Pfam" id="PF07733">
    <property type="entry name" value="DNA_pol3_alpha"/>
    <property type="match status" value="1"/>
</dbReference>
<dbReference type="Pfam" id="PF17657">
    <property type="entry name" value="DNA_pol3_finger"/>
    <property type="match status" value="1"/>
</dbReference>
<dbReference type="Pfam" id="PF20914">
    <property type="entry name" value="DNA_pol_IIIA_C"/>
    <property type="match status" value="1"/>
</dbReference>
<dbReference type="Pfam" id="PF14579">
    <property type="entry name" value="HHH_6"/>
    <property type="match status" value="1"/>
</dbReference>
<dbReference type="Pfam" id="PF02811">
    <property type="entry name" value="PHP"/>
    <property type="match status" value="1"/>
</dbReference>
<dbReference type="Pfam" id="PF01336">
    <property type="entry name" value="tRNA_anti-codon"/>
    <property type="match status" value="1"/>
</dbReference>
<dbReference type="SMART" id="SM00481">
    <property type="entry name" value="POLIIIAc"/>
    <property type="match status" value="1"/>
</dbReference>
<dbReference type="SUPFAM" id="SSF89550">
    <property type="entry name" value="PHP domain-like"/>
    <property type="match status" value="1"/>
</dbReference>
<keyword id="KW-0963">Cytoplasm</keyword>
<keyword id="KW-0235">DNA replication</keyword>
<keyword id="KW-0239">DNA-directed DNA polymerase</keyword>
<keyword id="KW-0548">Nucleotidyltransferase</keyword>
<keyword id="KW-1185">Reference proteome</keyword>
<keyword id="KW-0808">Transferase</keyword>
<comment type="function">
    <text evidence="1">DNA polymerase III is a complex, multichain enzyme responsible for most of the replicative synthesis in bacteria. This DNA polymerase also exhibits 3' to 5' exonuclease activity. The alpha chain is the DNA polymerase (By similarity).</text>
</comment>
<comment type="catalytic activity">
    <reaction>
        <text>DNA(n) + a 2'-deoxyribonucleoside 5'-triphosphate = DNA(n+1) + diphosphate</text>
        <dbReference type="Rhea" id="RHEA:22508"/>
        <dbReference type="Rhea" id="RHEA-COMP:17339"/>
        <dbReference type="Rhea" id="RHEA-COMP:17340"/>
        <dbReference type="ChEBI" id="CHEBI:33019"/>
        <dbReference type="ChEBI" id="CHEBI:61560"/>
        <dbReference type="ChEBI" id="CHEBI:173112"/>
        <dbReference type="EC" id="2.7.7.7"/>
    </reaction>
</comment>
<comment type="subunit">
    <text evidence="1">DNA polymerase III contains a core (composed of alpha, epsilon and theta chains) that associates with a tau subunit. This core dimerizes to form the PolIII' complex. PolIII' associates with the gamma complex (composed of gamma, delta, delta', psi and chi chains) and with the beta chain to form the complete DNA polymerase III complex (By similarity).</text>
</comment>
<comment type="subcellular location">
    <subcellularLocation>
        <location evidence="1">Cytoplasm</location>
    </subcellularLocation>
</comment>
<comment type="similarity">
    <text evidence="2">Belongs to the DNA polymerase type-C family. DnaE subfamily.</text>
</comment>
<evidence type="ECO:0000250" key="1"/>
<evidence type="ECO:0000305" key="2"/>
<feature type="chain" id="PRO_0000103312" description="DNA polymerase III subunit alpha">
    <location>
        <begin position="1"/>
        <end position="1161"/>
    </location>
</feature>
<gene>
    <name type="primary">dnaE</name>
    <name type="ordered locus">BU238</name>
</gene>
<proteinExistence type="inferred from homology"/>
<accession>P57332</accession>